<reference key="1">
    <citation type="journal article" date="2004" name="Science">
        <title>The Ashbya gossypii genome as a tool for mapping the ancient Saccharomyces cerevisiae genome.</title>
        <authorList>
            <person name="Dietrich F.S."/>
            <person name="Voegeli S."/>
            <person name="Brachat S."/>
            <person name="Lerch A."/>
            <person name="Gates K."/>
            <person name="Steiner S."/>
            <person name="Mohr C."/>
            <person name="Poehlmann R."/>
            <person name="Luedi P."/>
            <person name="Choi S."/>
            <person name="Wing R.A."/>
            <person name="Flavier A."/>
            <person name="Gaffney T.D."/>
            <person name="Philippsen P."/>
        </authorList>
    </citation>
    <scope>NUCLEOTIDE SEQUENCE [LARGE SCALE GENOMIC DNA]</scope>
    <source>
        <strain>ATCC 10895 / CBS 109.51 / FGSC 9923 / NRRL Y-1056</strain>
    </source>
</reference>
<reference key="2">
    <citation type="journal article" date="2013" name="G3 (Bethesda)">
        <title>Genomes of Ashbya fungi isolated from insects reveal four mating-type loci, numerous translocations, lack of transposons, and distinct gene duplications.</title>
        <authorList>
            <person name="Dietrich F.S."/>
            <person name="Voegeli S."/>
            <person name="Kuo S."/>
            <person name="Philippsen P."/>
        </authorList>
    </citation>
    <scope>GENOME REANNOTATION</scope>
    <scope>SEQUENCE REVISION TO C-TERMINUS</scope>
    <source>
        <strain>ATCC 10895 / CBS 109.51 / FGSC 9923 / NRRL Y-1056</strain>
    </source>
</reference>
<protein>
    <recommendedName>
        <fullName evidence="3">Small ribosomal subunit protein mS23</fullName>
    </recommendedName>
    <alternativeName>
        <fullName>37S ribosomal protein S25, mitochondrial</fullName>
    </alternativeName>
</protein>
<keyword id="KW-0496">Mitochondrion</keyword>
<keyword id="KW-1185">Reference proteome</keyword>
<keyword id="KW-0687">Ribonucleoprotein</keyword>
<keyword id="KW-0689">Ribosomal protein</keyword>
<gene>
    <name type="primary">RSM25</name>
    <name type="ordered locus">ADL211C</name>
</gene>
<dbReference type="EMBL" id="AE016817">
    <property type="protein sequence ID" value="AAS51709.2"/>
    <property type="molecule type" value="Genomic_DNA"/>
</dbReference>
<dbReference type="RefSeq" id="NP_983885.2">
    <property type="nucleotide sequence ID" value="NM_209238.2"/>
</dbReference>
<dbReference type="SMR" id="Q75AY1"/>
<dbReference type="FunCoup" id="Q75AY1">
    <property type="interactions" value="171"/>
</dbReference>
<dbReference type="STRING" id="284811.Q75AY1"/>
<dbReference type="EnsemblFungi" id="AAS51709">
    <property type="protein sequence ID" value="AAS51709"/>
    <property type="gene ID" value="AGOS_ADL211C"/>
</dbReference>
<dbReference type="GeneID" id="4620025"/>
<dbReference type="KEGG" id="ago:AGOS_ADL211C"/>
<dbReference type="eggNOG" id="ENOG502RZQQ">
    <property type="taxonomic scope" value="Eukaryota"/>
</dbReference>
<dbReference type="HOGENOM" id="CLU_081350_0_0_1"/>
<dbReference type="InParanoid" id="Q75AY1"/>
<dbReference type="OMA" id="ENWKIWA"/>
<dbReference type="OrthoDB" id="5542239at2759"/>
<dbReference type="Proteomes" id="UP000000591">
    <property type="component" value="Chromosome IV"/>
</dbReference>
<dbReference type="GO" id="GO:0005763">
    <property type="term" value="C:mitochondrial small ribosomal subunit"/>
    <property type="evidence" value="ECO:0000318"/>
    <property type="project" value="GO_Central"/>
</dbReference>
<dbReference type="GO" id="GO:0003735">
    <property type="term" value="F:structural constituent of ribosome"/>
    <property type="evidence" value="ECO:0000318"/>
    <property type="project" value="GO_Central"/>
</dbReference>
<dbReference type="InterPro" id="IPR016939">
    <property type="entry name" value="Ribosomal_mS23_fun"/>
</dbReference>
<dbReference type="PANTHER" id="PTHR37799">
    <property type="entry name" value="37S RIBOSOMAL PROTEIN S25, MITOCHONDRIAL"/>
    <property type="match status" value="1"/>
</dbReference>
<dbReference type="PANTHER" id="PTHR37799:SF1">
    <property type="entry name" value="SMALL RIBOSOMAL SUBUNIT PROTEIN MS23"/>
    <property type="match status" value="1"/>
</dbReference>
<dbReference type="Pfam" id="PF13741">
    <property type="entry name" value="MRP-S25"/>
    <property type="match status" value="1"/>
</dbReference>
<dbReference type="PIRSF" id="PIRSF029764">
    <property type="entry name" value="RSM25"/>
    <property type="match status" value="1"/>
</dbReference>
<proteinExistence type="inferred from homology"/>
<comment type="subunit">
    <text evidence="1">Component of the mitochondrial small ribosomal subunit.</text>
</comment>
<comment type="subcellular location">
    <subcellularLocation>
        <location evidence="1">Mitochondrion</location>
    </subcellularLocation>
</comment>
<comment type="similarity">
    <text evidence="3">Belongs to the mitochondrion-specific ribosomal protein mS23 family.</text>
</comment>
<feature type="chain" id="PRO_0000343539" description="Small ribosomal subunit protein mS23">
    <location>
        <begin position="1"/>
        <end position="258"/>
    </location>
</feature>
<feature type="region of interest" description="Disordered" evidence="2">
    <location>
        <begin position="230"/>
        <end position="258"/>
    </location>
</feature>
<feature type="compositionally biased region" description="Polar residues" evidence="2">
    <location>
        <begin position="230"/>
        <end position="239"/>
    </location>
</feature>
<feature type="compositionally biased region" description="Acidic residues" evidence="2">
    <location>
        <begin position="241"/>
        <end position="258"/>
    </location>
</feature>
<sequence length="258" mass="29868">MKIQTNAVNVLDRTSFYLQAGLLKKTPAWYNVVARIPPVTKFAREPKLHDPVSGKYKGELDIMTDRLNRNTETYKTRAGSSDRQTAAVHKPSKLRFIEDKLRSLFFQQHPWELSRPKVLVENMGNEQYDWSRMLQLGKPLDGESVVQRTLYLLKSGAHREMLAAYDQARFEFYRLRMQQELEEQIAYEEATMVGAVFKTTAVEHGLQQEQKVLDKWKEDVVAGLQLMSAKKNSTKQSWAEATEEKEEQDSAEPEELKL</sequence>
<organism>
    <name type="scientific">Eremothecium gossypii (strain ATCC 10895 / CBS 109.51 / FGSC 9923 / NRRL Y-1056)</name>
    <name type="common">Yeast</name>
    <name type="synonym">Ashbya gossypii</name>
    <dbReference type="NCBI Taxonomy" id="284811"/>
    <lineage>
        <taxon>Eukaryota</taxon>
        <taxon>Fungi</taxon>
        <taxon>Dikarya</taxon>
        <taxon>Ascomycota</taxon>
        <taxon>Saccharomycotina</taxon>
        <taxon>Saccharomycetes</taxon>
        <taxon>Saccharomycetales</taxon>
        <taxon>Saccharomycetaceae</taxon>
        <taxon>Eremothecium</taxon>
    </lineage>
</organism>
<accession>Q75AY1</accession>
<name>RT25_EREGS</name>
<evidence type="ECO:0000250" key="1"/>
<evidence type="ECO:0000256" key="2">
    <source>
        <dbReference type="SAM" id="MobiDB-lite"/>
    </source>
</evidence>
<evidence type="ECO:0000305" key="3"/>